<comment type="function">
    <text evidence="1 8 9 10 11 12">Controls cell shape changes in the neuroepithelium during neural tube closure (PubMed:10589677, PubMed:14680628). Induces apical constriction in epithelial cells by promoting the apical accumulation of F-actin and myosin II, and probably by bundling stress fibers (PubMed:14680628, PubMed:16249236, PubMed:16684770, PubMed:22493320). Induces apicobasal cell elongation by redistributing gamma-tubulin and directing the assembly of robust apicobasal microtubule arrays (By similarity).</text>
</comment>
<comment type="subunit">
    <text evidence="8 12">Interacts with F-actin (PubMed:10589677). Interacts with ROCK1 (PubMed:22493320).</text>
</comment>
<comment type="subcellular location">
    <subcellularLocation>
        <location evidence="8">Cell junction</location>
        <location evidence="8">Adherens junction</location>
    </subcellularLocation>
    <subcellularLocation>
        <location evidence="8">Cytoplasm</location>
        <location evidence="8">Cytoskeleton</location>
    </subcellularLocation>
    <subcellularLocation>
        <location evidence="12">Apical cell membrane</location>
        <topology evidence="16">Peripheral membrane protein</topology>
    </subcellularLocation>
    <text>Colocalizes with F-actin in stress fibers and adherens junctions.</text>
</comment>
<comment type="alternative products">
    <event type="alternative splicing"/>
    <isoform>
        <id>Q9QXN0-1</id>
        <name>1</name>
        <name>L,a</name>
        <sequence type="displayed"/>
    </isoform>
    <isoform>
        <id>Q9QXN0-2</id>
        <name>2</name>
        <name>S,b</name>
        <sequence type="described" ref="VSP_024969"/>
    </isoform>
    <isoform>
        <id>Q9QXN0-3</id>
        <name>3</name>
        <sequence type="described" ref="VSP_024970"/>
    </isoform>
    <isoform>
        <id>Q9QXN0-4</id>
        <name>4</name>
        <sequence type="described" ref="VSP_024969 VSP_024970"/>
    </isoform>
</comment>
<comment type="developmental stage">
    <text evidence="8">At 8.75 dpc, strongly expressed in the cranial neuroepithelium, and also expressed in neural tube, paraxial mesoderm and gut. At 10.5 dpc, expressed in neural tube, forebrain, somites, ventral body wall, heart and gut. At 14.5 dpc, expression is restricted to skeletal muscle, tips of the digits and forebrain.</text>
</comment>
<comment type="domain">
    <text>The ASD1 domain mediates F-actin binding.</text>
</comment>
<comment type="domain">
    <text evidence="12">The ASD2 domain mediates the interaction with ROCK1 and is required for apical constriction induction.</text>
</comment>
<comment type="disruption phenotype">
    <text evidence="8">Death at birth due to defects in neural tube closure causing exencephaly, acrania, facial clefting and spina bifida.</text>
</comment>
<comment type="similarity">
    <text evidence="16">Belongs to the shroom family.</text>
</comment>
<comment type="sequence caution" evidence="16">
    <conflict type="frameshift">
        <sequence resource="EMBL-CDS" id="AAF13269"/>
    </conflict>
</comment>
<comment type="sequence caution" evidence="16">
    <conflict type="frameshift">
        <sequence resource="EMBL-CDS" id="AAF13270"/>
    </conflict>
</comment>
<proteinExistence type="evidence at protein level"/>
<organism>
    <name type="scientific">Mus musculus</name>
    <name type="common">Mouse</name>
    <dbReference type="NCBI Taxonomy" id="10090"/>
    <lineage>
        <taxon>Eukaryota</taxon>
        <taxon>Metazoa</taxon>
        <taxon>Chordata</taxon>
        <taxon>Craniata</taxon>
        <taxon>Vertebrata</taxon>
        <taxon>Euteleostomi</taxon>
        <taxon>Mammalia</taxon>
        <taxon>Eutheria</taxon>
        <taxon>Euarchontoglires</taxon>
        <taxon>Glires</taxon>
        <taxon>Rodentia</taxon>
        <taxon>Myomorpha</taxon>
        <taxon>Muroidea</taxon>
        <taxon>Muridae</taxon>
        <taxon>Murinae</taxon>
        <taxon>Mus</taxon>
        <taxon>Mus</taxon>
    </lineage>
</organism>
<dbReference type="EMBL" id="AF199421">
    <property type="protein sequence ID" value="AAF13269.1"/>
    <property type="status" value="ALT_FRAME"/>
    <property type="molecule type" value="mRNA"/>
</dbReference>
<dbReference type="EMBL" id="AF199422">
    <property type="protein sequence ID" value="AAF13270.1"/>
    <property type="status" value="ALT_FRAME"/>
    <property type="molecule type" value="mRNA"/>
</dbReference>
<dbReference type="EMBL" id="AK147493">
    <property type="protein sequence ID" value="BAE27948.1"/>
    <property type="molecule type" value="mRNA"/>
</dbReference>
<dbReference type="EMBL" id="AK164918">
    <property type="protein sequence ID" value="BAE37966.1"/>
    <property type="molecule type" value="mRNA"/>
</dbReference>
<dbReference type="EMBL" id="AK129371">
    <property type="protein sequence ID" value="BAC98181.1"/>
    <property type="molecule type" value="mRNA"/>
</dbReference>
<dbReference type="EMBL" id="BC003909">
    <property type="protein sequence ID" value="AAH03909.1"/>
    <property type="molecule type" value="mRNA"/>
</dbReference>
<dbReference type="CCDS" id="CCDS39154.1">
    <molecule id="Q9QXN0-3"/>
</dbReference>
<dbReference type="CCDS" id="CCDS39155.1">
    <molecule id="Q9QXN0-4"/>
</dbReference>
<dbReference type="RefSeq" id="NP_001071063.1">
    <property type="nucleotide sequence ID" value="NM_001077595.2"/>
</dbReference>
<dbReference type="RefSeq" id="NP_001071064.1">
    <property type="nucleotide sequence ID" value="NM_001077596.2"/>
</dbReference>
<dbReference type="RefSeq" id="NP_056571.2">
    <property type="nucleotide sequence ID" value="NM_015756.2"/>
</dbReference>
<dbReference type="RefSeq" id="XP_006535031.1">
    <property type="nucleotide sequence ID" value="XM_006534968.2"/>
</dbReference>
<dbReference type="SMR" id="Q9QXN0"/>
<dbReference type="BioGRID" id="205229">
    <property type="interactions" value="6"/>
</dbReference>
<dbReference type="FunCoup" id="Q9QXN0">
    <property type="interactions" value="82"/>
</dbReference>
<dbReference type="IntAct" id="Q9QXN0">
    <property type="interactions" value="1"/>
</dbReference>
<dbReference type="STRING" id="10090.ENSMUSP00000108678"/>
<dbReference type="GlyGen" id="Q9QXN0">
    <property type="glycosylation" value="4 sites, 1 O-linked glycan (1 site)"/>
</dbReference>
<dbReference type="iPTMnet" id="Q9QXN0"/>
<dbReference type="PhosphoSitePlus" id="Q9QXN0"/>
<dbReference type="SwissPalm" id="Q9QXN0"/>
<dbReference type="PaxDb" id="10090-ENSMUSP00000108678"/>
<dbReference type="PeptideAtlas" id="Q9QXN0"/>
<dbReference type="ProteomicsDB" id="255419">
    <molecule id="Q9QXN0-1"/>
</dbReference>
<dbReference type="ProteomicsDB" id="255420">
    <molecule id="Q9QXN0-2"/>
</dbReference>
<dbReference type="ProteomicsDB" id="255421">
    <molecule id="Q9QXN0-3"/>
</dbReference>
<dbReference type="ProteomicsDB" id="255422">
    <molecule id="Q9QXN0-4"/>
</dbReference>
<dbReference type="DNASU" id="27428"/>
<dbReference type="GeneID" id="27428"/>
<dbReference type="KEGG" id="mmu:27428"/>
<dbReference type="AGR" id="MGI:1351655"/>
<dbReference type="CTD" id="57619"/>
<dbReference type="MGI" id="MGI:1351655">
    <property type="gene designation" value="Shroom3"/>
</dbReference>
<dbReference type="eggNOG" id="ENOG502QUU2">
    <property type="taxonomic scope" value="Eukaryota"/>
</dbReference>
<dbReference type="InParanoid" id="Q9QXN0"/>
<dbReference type="OrthoDB" id="10063560at2759"/>
<dbReference type="PhylomeDB" id="Q9QXN0"/>
<dbReference type="BioGRID-ORCS" id="27428">
    <property type="hits" value="2 hits in 76 CRISPR screens"/>
</dbReference>
<dbReference type="ChiTaRS" id="Shroom3">
    <property type="organism name" value="mouse"/>
</dbReference>
<dbReference type="PRO" id="PR:Q9QXN0"/>
<dbReference type="Proteomes" id="UP000000589">
    <property type="component" value="Unplaced"/>
</dbReference>
<dbReference type="RNAct" id="Q9QXN0">
    <property type="molecule type" value="protein"/>
</dbReference>
<dbReference type="GO" id="GO:0005912">
    <property type="term" value="C:adherens junction"/>
    <property type="evidence" value="ECO:0000314"/>
    <property type="project" value="MGI"/>
</dbReference>
<dbReference type="GO" id="GO:0043296">
    <property type="term" value="C:apical junction complex"/>
    <property type="evidence" value="ECO:0000314"/>
    <property type="project" value="MGI"/>
</dbReference>
<dbReference type="GO" id="GO:0045177">
    <property type="term" value="C:apical part of cell"/>
    <property type="evidence" value="ECO:0000314"/>
    <property type="project" value="MGI"/>
</dbReference>
<dbReference type="GO" id="GO:0016324">
    <property type="term" value="C:apical plasma membrane"/>
    <property type="evidence" value="ECO:0000314"/>
    <property type="project" value="MGI"/>
</dbReference>
<dbReference type="GO" id="GO:0005737">
    <property type="term" value="C:cytoplasm"/>
    <property type="evidence" value="ECO:0007669"/>
    <property type="project" value="UniProtKB-KW"/>
</dbReference>
<dbReference type="GO" id="GO:0005856">
    <property type="term" value="C:cytoskeleton"/>
    <property type="evidence" value="ECO:0000314"/>
    <property type="project" value="MGI"/>
</dbReference>
<dbReference type="GO" id="GO:0005874">
    <property type="term" value="C:microtubule"/>
    <property type="evidence" value="ECO:0007669"/>
    <property type="project" value="UniProtKB-KW"/>
</dbReference>
<dbReference type="GO" id="GO:0003779">
    <property type="term" value="F:actin binding"/>
    <property type="evidence" value="ECO:0000314"/>
    <property type="project" value="MGI"/>
</dbReference>
<dbReference type="GO" id="GO:0051015">
    <property type="term" value="F:actin filament binding"/>
    <property type="evidence" value="ECO:0007669"/>
    <property type="project" value="InterPro"/>
</dbReference>
<dbReference type="GO" id="GO:0030036">
    <property type="term" value="P:actin cytoskeleton organization"/>
    <property type="evidence" value="ECO:0000316"/>
    <property type="project" value="MGI"/>
</dbReference>
<dbReference type="GO" id="GO:0045176">
    <property type="term" value="P:apical protein localization"/>
    <property type="evidence" value="ECO:0000250"/>
    <property type="project" value="HGNC-UCL"/>
</dbReference>
<dbReference type="GO" id="GO:0000902">
    <property type="term" value="P:cell morphogenesis"/>
    <property type="evidence" value="ECO:0000250"/>
    <property type="project" value="HGNC-UCL"/>
</dbReference>
<dbReference type="GO" id="GO:0043482">
    <property type="term" value="P:cellular pigment accumulation"/>
    <property type="evidence" value="ECO:0000250"/>
    <property type="project" value="HGNC-UCL"/>
</dbReference>
<dbReference type="GO" id="GO:0002066">
    <property type="term" value="P:columnar/cuboidal epithelial cell development"/>
    <property type="evidence" value="ECO:0000314"/>
    <property type="project" value="MGI"/>
</dbReference>
<dbReference type="GO" id="GO:0001843">
    <property type="term" value="P:neural tube closure"/>
    <property type="evidence" value="ECO:0000315"/>
    <property type="project" value="MGI"/>
</dbReference>
<dbReference type="GO" id="GO:0007389">
    <property type="term" value="P:pattern specification process"/>
    <property type="evidence" value="ECO:0000315"/>
    <property type="project" value="MGI"/>
</dbReference>
<dbReference type="GO" id="GO:0008360">
    <property type="term" value="P:regulation of cell shape"/>
    <property type="evidence" value="ECO:0000314"/>
    <property type="project" value="MGI"/>
</dbReference>
<dbReference type="CDD" id="cd06750">
    <property type="entry name" value="PDZ_shroom2_3_4-like"/>
    <property type="match status" value="1"/>
</dbReference>
<dbReference type="FunFam" id="2.30.42.10:FF:000100">
    <property type="entry name" value="Shroom family member 2"/>
    <property type="match status" value="1"/>
</dbReference>
<dbReference type="Gene3D" id="2.30.42.10">
    <property type="match status" value="1"/>
</dbReference>
<dbReference type="Gene3D" id="6.10.250.3120">
    <property type="match status" value="1"/>
</dbReference>
<dbReference type="InterPro" id="IPR014800">
    <property type="entry name" value="ASD1_dom"/>
</dbReference>
<dbReference type="InterPro" id="IPR014799">
    <property type="entry name" value="ASD2_dom"/>
</dbReference>
<dbReference type="InterPro" id="IPR001478">
    <property type="entry name" value="PDZ"/>
</dbReference>
<dbReference type="InterPro" id="IPR036034">
    <property type="entry name" value="PDZ_sf"/>
</dbReference>
<dbReference type="InterPro" id="IPR027685">
    <property type="entry name" value="Shroom_fam"/>
</dbReference>
<dbReference type="PANTHER" id="PTHR15012">
    <property type="entry name" value="APICAL PROTEIN/SHROOM-RELATED"/>
    <property type="match status" value="1"/>
</dbReference>
<dbReference type="PANTHER" id="PTHR15012:SF33">
    <property type="entry name" value="PROTEIN SHROOM3"/>
    <property type="match status" value="1"/>
</dbReference>
<dbReference type="Pfam" id="PF08688">
    <property type="entry name" value="ASD1"/>
    <property type="match status" value="1"/>
</dbReference>
<dbReference type="Pfam" id="PF08687">
    <property type="entry name" value="ASD2"/>
    <property type="match status" value="1"/>
</dbReference>
<dbReference type="Pfam" id="PF00595">
    <property type="entry name" value="PDZ"/>
    <property type="match status" value="1"/>
</dbReference>
<dbReference type="SMART" id="SM00228">
    <property type="entry name" value="PDZ"/>
    <property type="match status" value="1"/>
</dbReference>
<dbReference type="SUPFAM" id="SSF50156">
    <property type="entry name" value="PDZ domain-like"/>
    <property type="match status" value="1"/>
</dbReference>
<dbReference type="PROSITE" id="PS51306">
    <property type="entry name" value="ASD1"/>
    <property type="match status" value="1"/>
</dbReference>
<dbReference type="PROSITE" id="PS51307">
    <property type="entry name" value="ASD2"/>
    <property type="match status" value="1"/>
</dbReference>
<dbReference type="PROSITE" id="PS50106">
    <property type="entry name" value="PDZ"/>
    <property type="match status" value="1"/>
</dbReference>
<evidence type="ECO:0000250" key="1">
    <source>
        <dbReference type="UniProtKB" id="Q27IV2"/>
    </source>
</evidence>
<evidence type="ECO:0000250" key="2">
    <source>
        <dbReference type="UniProtKB" id="Q8TF72"/>
    </source>
</evidence>
<evidence type="ECO:0000255" key="3"/>
<evidence type="ECO:0000255" key="4">
    <source>
        <dbReference type="PROSITE-ProRule" id="PRU00143"/>
    </source>
</evidence>
<evidence type="ECO:0000255" key="5">
    <source>
        <dbReference type="PROSITE-ProRule" id="PRU00637"/>
    </source>
</evidence>
<evidence type="ECO:0000255" key="6">
    <source>
        <dbReference type="PROSITE-ProRule" id="PRU00638"/>
    </source>
</evidence>
<evidence type="ECO:0000256" key="7">
    <source>
        <dbReference type="SAM" id="MobiDB-lite"/>
    </source>
</evidence>
<evidence type="ECO:0000269" key="8">
    <source>
    </source>
</evidence>
<evidence type="ECO:0000269" key="9">
    <source>
    </source>
</evidence>
<evidence type="ECO:0000269" key="10">
    <source>
    </source>
</evidence>
<evidence type="ECO:0000269" key="11">
    <source>
    </source>
</evidence>
<evidence type="ECO:0000269" key="12">
    <source>
    </source>
</evidence>
<evidence type="ECO:0000303" key="13">
    <source>
    </source>
</evidence>
<evidence type="ECO:0000303" key="14">
    <source>
    </source>
</evidence>
<evidence type="ECO:0000303" key="15">
    <source>
    </source>
</evidence>
<evidence type="ECO:0000305" key="16"/>
<evidence type="ECO:0007744" key="17">
    <source>
    </source>
</evidence>
<reference key="1">
    <citation type="journal article" date="1999" name="Cell">
        <title>Shroom, a PDZ domain-containing actin-binding protein, is required for neural tube morphogenesis in mice.</title>
        <authorList>
            <person name="Hildebrand J.D."/>
            <person name="Soriano P."/>
        </authorList>
    </citation>
    <scope>NUCLEOTIDE SEQUENCE [MRNA] (ISOFORMS 1 AND 2)</scope>
    <scope>DEVELOPMENTAL STAGE</scope>
    <scope>SUBCELLULAR LOCATION</scope>
    <scope>INTERACTION WITH F-ACTIN</scope>
    <scope>FUNCTION</scope>
    <scope>DISRUPTION PHENOTYPE</scope>
</reference>
<reference key="2">
    <citation type="journal article" date="2005" name="Science">
        <title>The transcriptional landscape of the mammalian genome.</title>
        <authorList>
            <person name="Carninci P."/>
            <person name="Kasukawa T."/>
            <person name="Katayama S."/>
            <person name="Gough J."/>
            <person name="Frith M.C."/>
            <person name="Maeda N."/>
            <person name="Oyama R."/>
            <person name="Ravasi T."/>
            <person name="Lenhard B."/>
            <person name="Wells C."/>
            <person name="Kodzius R."/>
            <person name="Shimokawa K."/>
            <person name="Bajic V.B."/>
            <person name="Brenner S.E."/>
            <person name="Batalov S."/>
            <person name="Forrest A.R."/>
            <person name="Zavolan M."/>
            <person name="Davis M.J."/>
            <person name="Wilming L.G."/>
            <person name="Aidinis V."/>
            <person name="Allen J.E."/>
            <person name="Ambesi-Impiombato A."/>
            <person name="Apweiler R."/>
            <person name="Aturaliya R.N."/>
            <person name="Bailey T.L."/>
            <person name="Bansal M."/>
            <person name="Baxter L."/>
            <person name="Beisel K.W."/>
            <person name="Bersano T."/>
            <person name="Bono H."/>
            <person name="Chalk A.M."/>
            <person name="Chiu K.P."/>
            <person name="Choudhary V."/>
            <person name="Christoffels A."/>
            <person name="Clutterbuck D.R."/>
            <person name="Crowe M.L."/>
            <person name="Dalla E."/>
            <person name="Dalrymple B.P."/>
            <person name="de Bono B."/>
            <person name="Della Gatta G."/>
            <person name="di Bernardo D."/>
            <person name="Down T."/>
            <person name="Engstrom P."/>
            <person name="Fagiolini M."/>
            <person name="Faulkner G."/>
            <person name="Fletcher C.F."/>
            <person name="Fukushima T."/>
            <person name="Furuno M."/>
            <person name="Futaki S."/>
            <person name="Gariboldi M."/>
            <person name="Georgii-Hemming P."/>
            <person name="Gingeras T.R."/>
            <person name="Gojobori T."/>
            <person name="Green R.E."/>
            <person name="Gustincich S."/>
            <person name="Harbers M."/>
            <person name="Hayashi Y."/>
            <person name="Hensch T.K."/>
            <person name="Hirokawa N."/>
            <person name="Hill D."/>
            <person name="Huminiecki L."/>
            <person name="Iacono M."/>
            <person name="Ikeo K."/>
            <person name="Iwama A."/>
            <person name="Ishikawa T."/>
            <person name="Jakt M."/>
            <person name="Kanapin A."/>
            <person name="Katoh M."/>
            <person name="Kawasawa Y."/>
            <person name="Kelso J."/>
            <person name="Kitamura H."/>
            <person name="Kitano H."/>
            <person name="Kollias G."/>
            <person name="Krishnan S.P."/>
            <person name="Kruger A."/>
            <person name="Kummerfeld S.K."/>
            <person name="Kurochkin I.V."/>
            <person name="Lareau L.F."/>
            <person name="Lazarevic D."/>
            <person name="Lipovich L."/>
            <person name="Liu J."/>
            <person name="Liuni S."/>
            <person name="McWilliam S."/>
            <person name="Madan Babu M."/>
            <person name="Madera M."/>
            <person name="Marchionni L."/>
            <person name="Matsuda H."/>
            <person name="Matsuzawa S."/>
            <person name="Miki H."/>
            <person name="Mignone F."/>
            <person name="Miyake S."/>
            <person name="Morris K."/>
            <person name="Mottagui-Tabar S."/>
            <person name="Mulder N."/>
            <person name="Nakano N."/>
            <person name="Nakauchi H."/>
            <person name="Ng P."/>
            <person name="Nilsson R."/>
            <person name="Nishiguchi S."/>
            <person name="Nishikawa S."/>
            <person name="Nori F."/>
            <person name="Ohara O."/>
            <person name="Okazaki Y."/>
            <person name="Orlando V."/>
            <person name="Pang K.C."/>
            <person name="Pavan W.J."/>
            <person name="Pavesi G."/>
            <person name="Pesole G."/>
            <person name="Petrovsky N."/>
            <person name="Piazza S."/>
            <person name="Reed J."/>
            <person name="Reid J.F."/>
            <person name="Ring B.Z."/>
            <person name="Ringwald M."/>
            <person name="Rost B."/>
            <person name="Ruan Y."/>
            <person name="Salzberg S.L."/>
            <person name="Sandelin A."/>
            <person name="Schneider C."/>
            <person name="Schoenbach C."/>
            <person name="Sekiguchi K."/>
            <person name="Semple C.A."/>
            <person name="Seno S."/>
            <person name="Sessa L."/>
            <person name="Sheng Y."/>
            <person name="Shibata Y."/>
            <person name="Shimada H."/>
            <person name="Shimada K."/>
            <person name="Silva D."/>
            <person name="Sinclair B."/>
            <person name="Sperling S."/>
            <person name="Stupka E."/>
            <person name="Sugiura K."/>
            <person name="Sultana R."/>
            <person name="Takenaka Y."/>
            <person name="Taki K."/>
            <person name="Tammoja K."/>
            <person name="Tan S.L."/>
            <person name="Tang S."/>
            <person name="Taylor M.S."/>
            <person name="Tegner J."/>
            <person name="Teichmann S.A."/>
            <person name="Ueda H.R."/>
            <person name="van Nimwegen E."/>
            <person name="Verardo R."/>
            <person name="Wei C.L."/>
            <person name="Yagi K."/>
            <person name="Yamanishi H."/>
            <person name="Zabarovsky E."/>
            <person name="Zhu S."/>
            <person name="Zimmer A."/>
            <person name="Hide W."/>
            <person name="Bult C."/>
            <person name="Grimmond S.M."/>
            <person name="Teasdale R.D."/>
            <person name="Liu E.T."/>
            <person name="Brusic V."/>
            <person name="Quackenbush J."/>
            <person name="Wahlestedt C."/>
            <person name="Mattick J.S."/>
            <person name="Hume D.A."/>
            <person name="Kai C."/>
            <person name="Sasaki D."/>
            <person name="Tomaru Y."/>
            <person name="Fukuda S."/>
            <person name="Kanamori-Katayama M."/>
            <person name="Suzuki M."/>
            <person name="Aoki J."/>
            <person name="Arakawa T."/>
            <person name="Iida J."/>
            <person name="Imamura K."/>
            <person name="Itoh M."/>
            <person name="Kato T."/>
            <person name="Kawaji H."/>
            <person name="Kawagashira N."/>
            <person name="Kawashima T."/>
            <person name="Kojima M."/>
            <person name="Kondo S."/>
            <person name="Konno H."/>
            <person name="Nakano K."/>
            <person name="Ninomiya N."/>
            <person name="Nishio T."/>
            <person name="Okada M."/>
            <person name="Plessy C."/>
            <person name="Shibata K."/>
            <person name="Shiraki T."/>
            <person name="Suzuki S."/>
            <person name="Tagami M."/>
            <person name="Waki K."/>
            <person name="Watahiki A."/>
            <person name="Okamura-Oho Y."/>
            <person name="Suzuki H."/>
            <person name="Kawai J."/>
            <person name="Hayashizaki Y."/>
        </authorList>
    </citation>
    <scope>NUCLEOTIDE SEQUENCE [LARGE SCALE MRNA] (ISOFORM 4)</scope>
    <source>
        <strain>C57BL/6J</strain>
        <tissue>Lung</tissue>
    </source>
</reference>
<reference key="3">
    <citation type="submission" date="2009-01" db="UniProtKB">
        <authorList>
            <person name="Lubec G."/>
            <person name="Sunyer B."/>
            <person name="Chen W.-Q."/>
        </authorList>
    </citation>
    <scope>PROTEIN SEQUENCE OF 123-145; 257-280; 283-300 AND 1107-1141</scope>
    <scope>IDENTIFICATION BY MASS SPECTROMETRY</scope>
    <source>
        <strain>OF1</strain>
        <tissue>Hippocampus</tissue>
    </source>
</reference>
<reference key="4">
    <citation type="journal article" date="2003" name="DNA Res.">
        <title>Prediction of the coding sequences of mouse homologues of KIAA gene: III. The complete nucleotide sequences of 500 mouse KIAA-homologous cDNAs identified by screening of terminal sequences of cDNA clones randomly sampled from size-fractionated libraries.</title>
        <authorList>
            <person name="Okazaki N."/>
            <person name="Kikuno R."/>
            <person name="Ohara R."/>
            <person name="Inamoto S."/>
            <person name="Koseki H."/>
            <person name="Hiraoka S."/>
            <person name="Saga Y."/>
            <person name="Nagase T."/>
            <person name="Ohara O."/>
            <person name="Koga H."/>
        </authorList>
    </citation>
    <scope>NUCLEOTIDE SEQUENCE [LARGE SCALE MRNA] OF 255-1986 (ISOFORM 3)</scope>
    <source>
        <tissue>Embryonic tail</tissue>
    </source>
</reference>
<reference key="5">
    <citation type="journal article" date="2004" name="Genome Res.">
        <title>The status, quality, and expansion of the NIH full-length cDNA project: the Mammalian Gene Collection (MGC).</title>
        <authorList>
            <consortium name="The MGC Project Team"/>
        </authorList>
    </citation>
    <scope>NUCLEOTIDE SEQUENCE [LARGE SCALE MRNA] OF 1506-1986 (ISOFORM 1)</scope>
    <source>
        <strain>FVB/N</strain>
        <tissue>Mammary tumor</tissue>
    </source>
</reference>
<reference key="6">
    <citation type="journal article" date="2003" name="Curr. Biol.">
        <title>Shroom induces apical constriction and is required for hingepoint formation during neural tube closure.</title>
        <authorList>
            <person name="Haigo S.L."/>
            <person name="Hildebrand J.D."/>
            <person name="Harland R.M."/>
            <person name="Wallingford J.B."/>
        </authorList>
    </citation>
    <scope>FUNCTION</scope>
</reference>
<reference key="7">
    <citation type="journal article" date="2005" name="J. Cell Sci.">
        <title>Shroom regulates epithelial cell shape via the apical positioning of an actomyosin network.</title>
        <authorList>
            <person name="Hildebrand J.D."/>
        </authorList>
    </citation>
    <scope>FUNCTION</scope>
</reference>
<reference key="8">
    <citation type="journal article" date="2006" name="J. Biol. Chem.">
        <title>Differential actin-dependent localization modulates the evolutionarily conserved activity of Shroom family proteins.</title>
        <authorList>
            <person name="Dietz M.L."/>
            <person name="Bernaciak T.M."/>
            <person name="Vendetti F."/>
            <person name="Kielec J.M."/>
            <person name="Hildebrand J.D."/>
        </authorList>
    </citation>
    <scope>FUNCTION</scope>
</reference>
<reference key="9">
    <citation type="journal article" date="2006" name="BMC Cell Biol.">
        <title>A new standard nomenclature for proteins related to Apx and Shroom.</title>
        <authorList>
            <person name="Hagens O."/>
            <person name="Ballabio A."/>
            <person name="Kalscheuer V."/>
            <person name="Kraehenbuhl J.-P."/>
            <person name="Schiaffino M.V."/>
            <person name="Smith P."/>
            <person name="Staub O."/>
            <person name="Hildebrand J.D."/>
            <person name="Wallingford J.B."/>
        </authorList>
    </citation>
    <scope>NOMENCLATURE</scope>
</reference>
<reference key="10">
    <citation type="journal article" date="2007" name="Proc. Natl. Acad. Sci. U.S.A.">
        <title>Large-scale phosphorylation analysis of mouse liver.</title>
        <authorList>
            <person name="Villen J."/>
            <person name="Beausoleil S.A."/>
            <person name="Gerber S.A."/>
            <person name="Gygi S.P."/>
        </authorList>
    </citation>
    <scope>IDENTIFICATION BY MASS SPECTROMETRY [LARGE SCALE ANALYSIS]</scope>
    <source>
        <tissue>Liver</tissue>
    </source>
</reference>
<reference key="11">
    <citation type="journal article" date="2010" name="Cell">
        <title>A tissue-specific atlas of mouse protein phosphorylation and expression.</title>
        <authorList>
            <person name="Huttlin E.L."/>
            <person name="Jedrychowski M.P."/>
            <person name="Elias J.E."/>
            <person name="Goswami T."/>
            <person name="Rad R."/>
            <person name="Beausoleil S.A."/>
            <person name="Villen J."/>
            <person name="Haas W."/>
            <person name="Sowa M.E."/>
            <person name="Gygi S.P."/>
        </authorList>
    </citation>
    <scope>PHOSPHORYLATION [LARGE SCALE ANALYSIS] AT SER-212; SER-439; SER-443; THR-909; SER-912; SER-1063; SER-1066 AND SER-1219</scope>
    <scope>PHOSPHORYLATION [LARGE SCALE ANALYSIS] AT SER-1350 AND SER-1354 (ISOFORM 3)</scope>
    <scope>PHOSPHORYLATION [LARGE SCALE ANALYSIS] AT SER-1175 AND SER-1179 (ISOFORM 4)</scope>
    <scope>IDENTIFICATION BY MASS SPECTROMETRY [LARGE SCALE ANALYSIS]</scope>
    <source>
        <tissue>Heart</tissue>
        <tissue>Kidney</tissue>
        <tissue>Lung</tissue>
        <tissue>Spleen</tissue>
        <tissue>Testis</tissue>
    </source>
</reference>
<reference key="12">
    <citation type="journal article" date="2012" name="Mol. Biol. Cell">
        <title>Structure of Shroom domain 2 reveals a three-segmented coiled-coil required for dimerization, Rock binding, and apical constriction.</title>
        <authorList>
            <person name="Mohan S."/>
            <person name="Rizaldy R."/>
            <person name="Das D."/>
            <person name="Bauer R.J."/>
            <person name="Heroux A."/>
            <person name="Trakselis M.A."/>
            <person name="Hildebrand J.D."/>
            <person name="VanDemark A.P."/>
        </authorList>
    </citation>
    <scope>FUNCTION</scope>
    <scope>INTERACTION WITH ROCK1</scope>
    <scope>SUBCELLULAR LOCATION</scope>
    <scope>DOMAIN</scope>
    <scope>MUTAGENESIS OF 1772-LYS--LEU-1776; 1838-LEU--LEU-1841; 1840-SER--ALA-1846; 1884-LEU--ARG-1891 AND 1921-LEU--LEU-1928</scope>
</reference>
<feature type="chain" id="PRO_0000286067" description="Protein Shroom3">
    <location>
        <begin position="1"/>
        <end position="1986"/>
    </location>
</feature>
<feature type="domain" description="PDZ" evidence="4">
    <location>
        <begin position="24"/>
        <end position="109"/>
    </location>
</feature>
<feature type="domain" description="ASD1" evidence="5">
    <location>
        <begin position="927"/>
        <end position="1023"/>
    </location>
</feature>
<feature type="domain" description="ASD2" evidence="6">
    <location>
        <begin position="1659"/>
        <end position="1947"/>
    </location>
</feature>
<feature type="region of interest" description="Disordered" evidence="7">
    <location>
        <begin position="1"/>
        <end position="21"/>
    </location>
</feature>
<feature type="region of interest" description="Disordered" evidence="7">
    <location>
        <begin position="152"/>
        <end position="199"/>
    </location>
</feature>
<feature type="region of interest" description="Disordered" evidence="7">
    <location>
        <begin position="211"/>
        <end position="239"/>
    </location>
</feature>
<feature type="region of interest" description="Disordered" evidence="7">
    <location>
        <begin position="265"/>
        <end position="285"/>
    </location>
</feature>
<feature type="region of interest" description="Disordered" evidence="7">
    <location>
        <begin position="342"/>
        <end position="463"/>
    </location>
</feature>
<feature type="region of interest" description="Disordered" evidence="7">
    <location>
        <begin position="564"/>
        <end position="1055"/>
    </location>
</feature>
<feature type="region of interest" description="Disordered" evidence="7">
    <location>
        <begin position="1083"/>
        <end position="1102"/>
    </location>
</feature>
<feature type="region of interest" description="Disordered" evidence="7">
    <location>
        <begin position="1107"/>
        <end position="1223"/>
    </location>
</feature>
<feature type="region of interest" description="Disordered" evidence="7">
    <location>
        <begin position="1304"/>
        <end position="1425"/>
    </location>
</feature>
<feature type="region of interest" description="Disordered" evidence="7">
    <location>
        <begin position="1446"/>
        <end position="1654"/>
    </location>
</feature>
<feature type="coiled-coil region" evidence="3">
    <location>
        <begin position="1844"/>
        <end position="1890"/>
    </location>
</feature>
<feature type="compositionally biased region" description="Polar residues" evidence="7">
    <location>
        <begin position="357"/>
        <end position="376"/>
    </location>
</feature>
<feature type="compositionally biased region" description="Polar residues" evidence="7">
    <location>
        <begin position="415"/>
        <end position="425"/>
    </location>
</feature>
<feature type="compositionally biased region" description="Basic and acidic residues" evidence="7">
    <location>
        <begin position="430"/>
        <end position="440"/>
    </location>
</feature>
<feature type="compositionally biased region" description="Polar residues" evidence="7">
    <location>
        <begin position="595"/>
        <end position="607"/>
    </location>
</feature>
<feature type="compositionally biased region" description="Basic and acidic residues" evidence="7">
    <location>
        <begin position="630"/>
        <end position="645"/>
    </location>
</feature>
<feature type="compositionally biased region" description="Polar residues" evidence="7">
    <location>
        <begin position="653"/>
        <end position="677"/>
    </location>
</feature>
<feature type="compositionally biased region" description="Low complexity" evidence="7">
    <location>
        <begin position="747"/>
        <end position="761"/>
    </location>
</feature>
<feature type="compositionally biased region" description="Basic and acidic residues" evidence="7">
    <location>
        <begin position="774"/>
        <end position="785"/>
    </location>
</feature>
<feature type="compositionally biased region" description="Low complexity" evidence="7">
    <location>
        <begin position="796"/>
        <end position="814"/>
    </location>
</feature>
<feature type="compositionally biased region" description="Low complexity" evidence="7">
    <location>
        <begin position="865"/>
        <end position="874"/>
    </location>
</feature>
<feature type="compositionally biased region" description="Basic and acidic residues" evidence="7">
    <location>
        <begin position="895"/>
        <end position="908"/>
    </location>
</feature>
<feature type="compositionally biased region" description="Basic and acidic residues" evidence="7">
    <location>
        <begin position="1004"/>
        <end position="1020"/>
    </location>
</feature>
<feature type="compositionally biased region" description="Low complexity" evidence="7">
    <location>
        <begin position="1114"/>
        <end position="1127"/>
    </location>
</feature>
<feature type="compositionally biased region" description="Basic and acidic residues" evidence="7">
    <location>
        <begin position="1134"/>
        <end position="1146"/>
    </location>
</feature>
<feature type="compositionally biased region" description="Low complexity" evidence="7">
    <location>
        <begin position="1307"/>
        <end position="1318"/>
    </location>
</feature>
<feature type="compositionally biased region" description="Polar residues" evidence="7">
    <location>
        <begin position="1366"/>
        <end position="1399"/>
    </location>
</feature>
<feature type="compositionally biased region" description="Low complexity" evidence="7">
    <location>
        <begin position="1455"/>
        <end position="1469"/>
    </location>
</feature>
<feature type="compositionally biased region" description="Pro residues" evidence="7">
    <location>
        <begin position="1513"/>
        <end position="1524"/>
    </location>
</feature>
<feature type="compositionally biased region" description="Polar residues" evidence="7">
    <location>
        <begin position="1581"/>
        <end position="1630"/>
    </location>
</feature>
<feature type="compositionally biased region" description="Basic and acidic residues" evidence="7">
    <location>
        <begin position="1634"/>
        <end position="1654"/>
    </location>
</feature>
<feature type="modified residue" description="Phosphoserine" evidence="17">
    <location>
        <position position="212"/>
    </location>
</feature>
<feature type="modified residue" description="Phosphoserine" evidence="17">
    <location>
        <position position="439"/>
    </location>
</feature>
<feature type="modified residue" description="Phosphoserine" evidence="17">
    <location>
        <position position="443"/>
    </location>
</feature>
<feature type="modified residue" description="Phosphoserine" evidence="2">
    <location>
        <position position="888"/>
    </location>
</feature>
<feature type="modified residue" description="Phosphothreonine" evidence="17">
    <location>
        <position position="909"/>
    </location>
</feature>
<feature type="modified residue" description="Phosphoserine" evidence="17">
    <location>
        <position position="912"/>
    </location>
</feature>
<feature type="modified residue" description="Phosphoserine" evidence="2">
    <location>
        <position position="969"/>
    </location>
</feature>
<feature type="modified residue" description="Phosphoserine" evidence="17">
    <location>
        <position position="1063"/>
    </location>
</feature>
<feature type="modified residue" description="Phosphoserine" evidence="17">
    <location>
        <position position="1066"/>
    </location>
</feature>
<feature type="modified residue" description="Phosphoserine" evidence="17">
    <location>
        <position position="1219"/>
    </location>
</feature>
<feature type="splice variant" id="VSP_024969" description="In isoform 2 and isoform 4." evidence="13 15">
    <location>
        <begin position="1"/>
        <end position="175"/>
    </location>
</feature>
<feature type="splice variant" id="VSP_024970" description="In isoform 3 and isoform 4." evidence="14 15">
    <location>
        <begin position="1354"/>
        <end position="1359"/>
    </location>
</feature>
<feature type="mutagenesis site" description="Does not affect binding to ROCK1.">
    <original>KKAEL</original>
    <variation>AKARA</variation>
    <location>
        <begin position="1772"/>
        <end position="1776"/>
    </location>
</feature>
<feature type="mutagenesis site" description="Loss of dimerization, binding to ROCK1 and ability to trigger apical constriction in cells." evidence="12">
    <original>LLSL</original>
    <variation>AASA</variation>
    <location>
        <begin position="1838"/>
        <end position="1841"/>
    </location>
</feature>
<feature type="mutagenesis site" description="Reduces binding to ROCK1 and ability to trigger apical constriction in cells." evidence="12">
    <original>SLSGRLA</original>
    <variation>ALEADLE</variation>
    <location>
        <begin position="1840"/>
        <end position="1846"/>
    </location>
</feature>
<feature type="mutagenesis site" description="Loss of binding to ROCK1 and ability to trigger apical constriction in cells." evidence="12">
    <original>LKENLDRR</original>
    <variation>AAENLDDA</variation>
    <location>
        <begin position="1884"/>
        <end position="1891"/>
    </location>
</feature>
<feature type="mutagenesis site" description="Loss of dimerization, binding to ROCK1 and ability to trigger apical constriction in cells." evidence="12">
    <original>LLIEQRKL</original>
    <variation>ALIEQAKA</variation>
    <location>
        <begin position="1921"/>
        <end position="1928"/>
    </location>
</feature>
<feature type="sequence conflict" description="In Ref. 1; AAF13270/AAF13269." evidence="16" ref="1">
    <original>Q</original>
    <variation>H</variation>
    <location>
        <position position="409"/>
    </location>
</feature>
<feature type="sequence conflict" description="In Ref. 1; AAF13270/AAF13269." evidence="16" ref="1">
    <original>R</original>
    <variation>K</variation>
    <location>
        <position position="617"/>
    </location>
</feature>
<feature type="sequence conflict" description="In Ref. 4; BAC98181." evidence="16" ref="4">
    <original>Q</original>
    <variation>P</variation>
    <location>
        <position position="683"/>
    </location>
</feature>
<feature type="sequence conflict" description="In Ref. 1; AAF13270/AAF13269." evidence="16" ref="1">
    <original>Y</original>
    <variation>N</variation>
    <location>
        <position position="800"/>
    </location>
</feature>
<feature type="sequence conflict" description="In Ref. 1; AAF13270/AAF13269." evidence="16" ref="1">
    <original>S</original>
    <variation>N</variation>
    <location>
        <position position="1078"/>
    </location>
</feature>
<feature type="sequence conflict" description="In Ref. 1; AAF13270/AAF13269." evidence="16" ref="1">
    <original>R</original>
    <variation>K</variation>
    <location>
        <position position="1239"/>
    </location>
</feature>
<feature type="sequence conflict" description="In Ref. 1; AAF13270/AAF13269." evidence="16" ref="1">
    <original>P</original>
    <variation>H</variation>
    <location>
        <position position="1293"/>
    </location>
</feature>
<feature type="sequence conflict" description="In Ref. 4; BAC98181." evidence="16" ref="4">
    <original>A</original>
    <variation>S</variation>
    <location>
        <position position="1318"/>
    </location>
</feature>
<feature type="sequence conflict" description="In Ref. 1; AAF13270/AAF13269." evidence="16" ref="1">
    <original>P</original>
    <variation>L</variation>
    <location>
        <position position="1397"/>
    </location>
</feature>
<feature type="sequence conflict" description="In Ref. 4; BAC98181." evidence="16" ref="4">
    <original>GE</original>
    <variation>EK</variation>
    <location>
        <begin position="1407"/>
        <end position="1408"/>
    </location>
</feature>
<feature type="sequence conflict" description="In Ref. 4; BAC98181." evidence="16" ref="4">
    <original>R</original>
    <variation>Q</variation>
    <location>
        <position position="1419"/>
    </location>
</feature>
<feature type="sequence conflict" description="In Ref. 4; BAC98181." evidence="16" ref="4">
    <original>P</original>
    <variation>L</variation>
    <location>
        <position position="1423"/>
    </location>
</feature>
<feature type="sequence conflict" description="In Ref. 4; BAC98181." evidence="16" ref="4">
    <original>R</original>
    <variation>L</variation>
    <location>
        <position position="1457"/>
    </location>
</feature>
<feature type="sequence conflict" description="In Ref. 1; AAF13270/AAF13269." evidence="16" ref="1">
    <original>N</original>
    <variation>Y</variation>
    <location>
        <position position="1770"/>
    </location>
</feature>
<feature type="sequence conflict" description="In Ref. 2; BAE27948/BAE37966." evidence="16" ref="2">
    <original>A</original>
    <variation>G</variation>
    <location>
        <position position="1967"/>
    </location>
</feature>
<feature type="modified residue" description="Phosphoserine" evidence="17">
    <location sequence="Q9QXN0-3">
        <position position="1350"/>
    </location>
</feature>
<feature type="modified residue" description="Phosphoserine" evidence="17">
    <location sequence="Q9QXN0-3">
        <position position="1354"/>
    </location>
</feature>
<feature type="modified residue" description="Phosphoserine" evidence="17">
    <location sequence="Q9QXN0-4">
        <position position="1175"/>
    </location>
</feature>
<feature type="modified residue" description="Phosphoserine" evidence="17">
    <location sequence="Q9QXN0-4">
        <position position="1179"/>
    </location>
</feature>
<name>SHRM3_MOUSE</name>
<protein>
    <recommendedName>
        <fullName>Protein Shroom3</fullName>
    </recommendedName>
</protein>
<sequence>MKTPENLEEPSATPNPSRTPTERFVYLEALLEGGAPWGFTLKGGLERGEPLIISKIEEGGKADSVSSGLQAGDEVIHINEVALSSPRREAVSLVKGSYKTLRLVVRRDVCAAPGHADPGTSKSLSSELLTCSPQHRKATWSGGVKLRLKQRCSEPATRPHSWHTTKFGETQPDVSMMQISQGTMGPPWHQSYHSSSSTSDLSNYDHAYLRRSPDQCSSQGSMESLEPSGGYPPCHLLSPAKSTSSIDQLGHLHNKRDSAYSSFSTSSSIFEYPPPGGSARERSGSMDVISARGGLLEGMRQADIRYVKTVYDTRRGVSSEYEVNPSALLLQGRDAHASADSQGCAKWHSIPRGKGTPSPSWSQQCSGSLETATDNLPQKAGAPLPPTRSDSYAAFRHRERPSSWSSLDQKRFCRPQTNSSGSQKTPFAEDQLHTVPERSPENSPPVKSKHNYTQKAQPGQPLLPTGIYPVPSPEPHFAQVPQPSVSSNGTVYPALVKESGYTAAQGTCNKMATLDENGNQNEASRPGFAFCQPLEHNSVTPVEKRPEPTAKYIYKVHFSSVPENEDSSLKRHITPPHGHSPYPSERKNIHGGSRACSNHHSLSSPQAQALHVGDDRRPSRLSQPWEGDFQEDHNANLRQKVEREGQGQGLSGNSGRTRSAFSSLQNIPESLRRQSNVELGEAQEVHPGGRSKVEDPGRKAGASDIRGYLDRSVSYPRPEGKMNAVDSVHSADSRYEESPAPALPQTSGASQRRLSSSSSAAPQYRKPHCSVLEKVSRIEEREQGRHRPLSVGSSAYGPGYRPGRTGPTPSTSSSDLDDPKAGSVHFSESTEHLRNGEQNPPNGEAKQEEASRPQCSHLIRRAPADGRGPPARGGEPSRPEARLLRSQSTFQLYSEAEREASWSEDRPGTPESPLLDAPFSRAYRNSIKDAQSRVLGATSFRRRDLEPGTPATSRPWRPRPASAHVGMRSPEAAVPSSSPHTPRERHSVTPAAPQAARRGPRRRLTVEQKKRSYSEPEKMNEVGVSEEAEPTPCGPPRPAQPRFSESTVADRRRIFERDGKACSTLSLSGPELKQFQQSALADYIQRKTGKRPTGAACTPEAGLRERAQSAYLQAGPAAPDGPGLASACSLSSLREPEALPRKEHTHPSAADGPQAPRDRSSSFASGRLVGERRRWDPQVPRQLLSGANCEPRGVQRMDGAPGGPPSWGMVAGKAGKSKSAEDLLERSDTLAVPVHVRSRSSPTSDKKGQDVLLREGSNFGFVKDPCCLAGPGPRSLSCSDKGQNELALPLHHPTPCWNGSGCKATVASSAPPESSGAADHLKQRRAPGPRPLSAGMHGHFPDARAASLSSPLPSPVPSASPVPSSYRSQLAMDQQTGQQPPSSPASAVTQPTSPRSPELSSPAYGLGEGMWKRTSLPQRPPPPWVKWAHAVREDGLAEDTLAPEFANLKHYRNQPSRPSSCSTSDPDTPGRISLRISESALQPSPPPRGDYDDEVFMKDLHPKVTSSPTFEALPPPPPPSPPSEEPLVNGTDDFPPPPPPQALCEVLLDGEASTEAGSGPCRIPRVMVTREGHVPGAAHSEGSQIMTATPPQTSAKGSEAESNTPSSASAQPQLNGSPGKQLCPSQTRNLTYEPVERTQDLGKKTHAEPQKTSEDIRTEALAKEIVHQDKSLADILDPDSRMKTTMDLMEGLFPGDASVLMDSGAKRKALDITARRAGCEAKASDHKEAVSVLVNCPAYYSVSAAKAELLNKIKDMPEELQEEEGQEDVNEKKAELIGSLTHKLESLQEAKGSLLTDIKLNNALGEEVEALISELCKPNEFDKYKMFIGDLDKVVNLLLSLSGRLARVENVLRGLGEDASKEERSSLNEKRKVLAGQHEDARELKENLDRRERVVLDILANYLSAEQLQDYQHFVKMKSTLLIEQRKLDDKIKLGQEQVRCLLESLPSDFRPKAGAISLPPALTGHATPGGTSVFGGVFPTLTSPL</sequence>
<gene>
    <name type="primary">Shroom3</name>
    <name type="synonym">Kiaa1481</name>
    <name type="synonym">Shrm</name>
</gene>
<keyword id="KW-0009">Actin-binding</keyword>
<keyword id="KW-0025">Alternative splicing</keyword>
<keyword id="KW-0965">Cell junction</keyword>
<keyword id="KW-1003">Cell membrane</keyword>
<keyword id="KW-0133">Cell shape</keyword>
<keyword id="KW-0175">Coiled coil</keyword>
<keyword id="KW-0963">Cytoplasm</keyword>
<keyword id="KW-0206">Cytoskeleton</keyword>
<keyword id="KW-0217">Developmental protein</keyword>
<keyword id="KW-0903">Direct protein sequencing</keyword>
<keyword id="KW-0472">Membrane</keyword>
<keyword id="KW-0493">Microtubule</keyword>
<keyword id="KW-0597">Phosphoprotein</keyword>
<keyword id="KW-1185">Reference proteome</keyword>
<accession>Q9QXN0</accession>
<accession>Q3TNX1</accession>
<accession>Q6ZPP9</accession>
<accession>Q99L16</accession>
<accession>Q9QXM9</accession>